<accession>Q9R1B1</accession>
<accession>O88471</accession>
<keyword id="KW-1015">Disulfide bond</keyword>
<keyword id="KW-0472">Membrane</keyword>
<keyword id="KW-0479">Metal-binding</keyword>
<keyword id="KW-0496">Mitochondrion</keyword>
<keyword id="KW-0999">Mitochondrion inner membrane</keyword>
<keyword id="KW-0653">Protein transport</keyword>
<keyword id="KW-1185">Reference proteome</keyword>
<keyword id="KW-0811">Translocation</keyword>
<keyword id="KW-0813">Transport</keyword>
<keyword id="KW-0862">Zinc</keyword>
<name>T10B_RAT</name>
<proteinExistence type="inferred from homology"/>
<reference key="1">
    <citation type="journal article" date="1999" name="FEBS Lett.">
        <title>The mitochondrial TIM22 preprotein translocase is highly conserved throughout the eukaryotic kingdom.</title>
        <authorList>
            <person name="Bauer M.F."/>
            <person name="Rothbauer U."/>
            <person name="Muehlenbein N."/>
            <person name="Smith R.J.H."/>
            <person name="Gerbitz K.-D."/>
            <person name="Neupert W."/>
            <person name="Brunner M."/>
            <person name="Hofmann S."/>
        </authorList>
    </citation>
    <scope>NUCLEOTIDE SEQUENCE [MRNA]</scope>
</reference>
<reference key="2">
    <citation type="journal article" date="1998" name="Biochem. Biophys. Res. Commun.">
        <title>Cloning of a novel cDNA expressed during the early stages of fracture healing.</title>
        <authorList>
            <person name="Hadjiargyrou M."/>
            <person name="Halsey M.F."/>
            <person name="Ahrens W."/>
            <person name="Rightmire E.P."/>
            <person name="McLeod K.J."/>
            <person name="Rubin C.T."/>
        </authorList>
    </citation>
    <scope>NUCLEOTIDE SEQUENCE [MRNA] OF 21-100</scope>
</reference>
<dbReference type="EMBL" id="AF150106">
    <property type="protein sequence ID" value="AAD40012.1"/>
    <property type="molecule type" value="mRNA"/>
</dbReference>
<dbReference type="EMBL" id="AF061242">
    <property type="protein sequence ID" value="AAC34297.1"/>
    <property type="molecule type" value="mRNA"/>
</dbReference>
<dbReference type="PIR" id="JE0277">
    <property type="entry name" value="JE0277"/>
</dbReference>
<dbReference type="RefSeq" id="NP_001376161.1">
    <property type="nucleotide sequence ID" value="NM_001389232.1"/>
</dbReference>
<dbReference type="RefSeq" id="NP_445823.1">
    <property type="nucleotide sequence ID" value="NM_053371.3"/>
</dbReference>
<dbReference type="SMR" id="Q9R1B1"/>
<dbReference type="FunCoup" id="Q9R1B1">
    <property type="interactions" value="1406"/>
</dbReference>
<dbReference type="STRING" id="10116.ENSRNOP00000064088"/>
<dbReference type="PhosphoSitePlus" id="Q9R1B1"/>
<dbReference type="jPOST" id="Q9R1B1"/>
<dbReference type="PaxDb" id="10116-ENSRNOP00000064088"/>
<dbReference type="Ensembl" id="ENSRNOT00000076631.2">
    <property type="protein sequence ID" value="ENSRNOP00000068264.1"/>
    <property type="gene ID" value="ENSRNOG00000050846.4"/>
</dbReference>
<dbReference type="GeneID" id="84384"/>
<dbReference type="KEGG" id="rno:84384"/>
<dbReference type="UCSC" id="RGD:71097">
    <property type="organism name" value="rat"/>
</dbReference>
<dbReference type="AGR" id="RGD:71097"/>
<dbReference type="CTD" id="26515"/>
<dbReference type="RGD" id="71097">
    <property type="gene designation" value="Timm10b"/>
</dbReference>
<dbReference type="eggNOG" id="KOG3479">
    <property type="taxonomic scope" value="Eukaryota"/>
</dbReference>
<dbReference type="GeneTree" id="ENSGT00450000040326"/>
<dbReference type="HOGENOM" id="CLU_141397_2_2_1"/>
<dbReference type="InParanoid" id="Q9R1B1"/>
<dbReference type="OrthoDB" id="18128at9989"/>
<dbReference type="PhylomeDB" id="Q9R1B1"/>
<dbReference type="TreeFam" id="TF106188"/>
<dbReference type="PRO" id="PR:Q9R1B1"/>
<dbReference type="Proteomes" id="UP000002494">
    <property type="component" value="Chromosome 1"/>
</dbReference>
<dbReference type="Bgee" id="ENSRNOG00000050846">
    <property type="expression patterns" value="Expressed in pancreas and 20 other cell types or tissues"/>
</dbReference>
<dbReference type="ExpressionAtlas" id="Q9R1B1">
    <property type="expression patterns" value="baseline and differential"/>
</dbReference>
<dbReference type="GO" id="GO:0005743">
    <property type="term" value="C:mitochondrial inner membrane"/>
    <property type="evidence" value="ECO:0000266"/>
    <property type="project" value="RGD"/>
</dbReference>
<dbReference type="GO" id="GO:0005758">
    <property type="term" value="C:mitochondrial intermembrane space"/>
    <property type="evidence" value="ECO:0000266"/>
    <property type="project" value="RGD"/>
</dbReference>
<dbReference type="GO" id="GO:0042719">
    <property type="term" value="C:mitochondrial intermembrane space protein transporter complex"/>
    <property type="evidence" value="ECO:0000266"/>
    <property type="project" value="RGD"/>
</dbReference>
<dbReference type="GO" id="GO:0042721">
    <property type="term" value="C:TIM22 mitochondrial import inner membrane insertion complex"/>
    <property type="evidence" value="ECO:0000250"/>
    <property type="project" value="UniProtKB"/>
</dbReference>
<dbReference type="GO" id="GO:0046872">
    <property type="term" value="F:metal ion binding"/>
    <property type="evidence" value="ECO:0007669"/>
    <property type="project" value="UniProtKB-KW"/>
</dbReference>
<dbReference type="GO" id="GO:0015031">
    <property type="term" value="P:protein transport"/>
    <property type="evidence" value="ECO:0007669"/>
    <property type="project" value="UniProtKB-KW"/>
</dbReference>
<dbReference type="FunFam" id="1.10.287.810:FF:000006">
    <property type="entry name" value="mitochondrial import inner membrane translocase subunit Tim10 B"/>
    <property type="match status" value="1"/>
</dbReference>
<dbReference type="Gene3D" id="1.10.287.810">
    <property type="entry name" value="Mitochondrial import inner membrane translocase subunit tim13 like domains"/>
    <property type="match status" value="1"/>
</dbReference>
<dbReference type="InterPro" id="IPR050673">
    <property type="entry name" value="Mito_inner_translocase_sub"/>
</dbReference>
<dbReference type="InterPro" id="IPR004217">
    <property type="entry name" value="Tim10-like"/>
</dbReference>
<dbReference type="InterPro" id="IPR035427">
    <property type="entry name" value="Tim10-like_dom_sf"/>
</dbReference>
<dbReference type="PANTHER" id="PTHR13172">
    <property type="entry name" value="MITOCHONDRIAL IMPORT INNER MEMBRANE TRANSLOCASE SUBUNIT TIM9B"/>
    <property type="match status" value="1"/>
</dbReference>
<dbReference type="Pfam" id="PF02953">
    <property type="entry name" value="zf-Tim10_DDP"/>
    <property type="match status" value="1"/>
</dbReference>
<dbReference type="SUPFAM" id="SSF144122">
    <property type="entry name" value="Tim10-like"/>
    <property type="match status" value="1"/>
</dbReference>
<feature type="chain" id="PRO_0000193600" description="Mitochondrial import inner membrane translocase subunit Tim10 B">
    <location>
        <begin position="1"/>
        <end position="100"/>
    </location>
</feature>
<feature type="short sequence motif" description="Twin CX3C motif">
    <location>
        <begin position="25"/>
        <end position="49"/>
    </location>
</feature>
<feature type="disulfide bond" evidence="1">
    <location>
        <begin position="25"/>
        <end position="49"/>
    </location>
</feature>
<feature type="disulfide bond" evidence="1">
    <location>
        <begin position="29"/>
        <end position="45"/>
    </location>
</feature>
<gene>
    <name type="primary">Timm10b</name>
    <name type="synonym">Fxc1</name>
    <name type="synonym">Tim9b</name>
    <name type="synonym">Timm9b</name>
</gene>
<organism>
    <name type="scientific">Rattus norvegicus</name>
    <name type="common">Rat</name>
    <dbReference type="NCBI Taxonomy" id="10116"/>
    <lineage>
        <taxon>Eukaryota</taxon>
        <taxon>Metazoa</taxon>
        <taxon>Chordata</taxon>
        <taxon>Craniata</taxon>
        <taxon>Vertebrata</taxon>
        <taxon>Euteleostomi</taxon>
        <taxon>Mammalia</taxon>
        <taxon>Eutheria</taxon>
        <taxon>Euarchontoglires</taxon>
        <taxon>Glires</taxon>
        <taxon>Rodentia</taxon>
        <taxon>Myomorpha</taxon>
        <taxon>Muroidea</taxon>
        <taxon>Muridae</taxon>
        <taxon>Murinae</taxon>
        <taxon>Rattus</taxon>
    </lineage>
</organism>
<protein>
    <recommendedName>
        <fullName>Mitochondrial import inner membrane translocase subunit Tim10 B</fullName>
    </recommendedName>
    <alternativeName>
        <fullName>Fracture callus protein 1</fullName>
    </alternativeName>
    <alternativeName>
        <fullName>FxC1</fullName>
    </alternativeName>
    <alternativeName>
        <fullName>Mitochondrial import inner membrane translocase subunit Tim9 B</fullName>
    </alternativeName>
    <alternativeName>
        <fullName>TIMM10B</fullName>
        <shortName>Tim10b</shortName>
    </alternativeName>
</protein>
<sequence length="100" mass="11351">MEHQQQQLRNLRDFLLVYNRMTELCFQRCVPSLHHRALDAEEEACLHSCAGKLIHSNHRLMAAYVHLMPALVQRRMADYEAASAVPGVPAEQPRDSPSGS</sequence>
<comment type="function">
    <text evidence="2">Component of the TIM22 complex, a complex that mediates the import and insertion of multi-pass transmembrane proteins into the mitochondrial inner membrane. The TIM22 complex forms a twin-pore translocase that uses the membrane potential as the external driving force. In the TIM22 complex, it may act as a docking point for the soluble 70 kDa complex that guides the target proteins in transit through the aqueous mitochondrial intermembrane space.</text>
</comment>
<comment type="subunit">
    <text evidence="2">Component of the TIM22 complex, which core is composed of TIMM22, associated with TIMM10 (TIMM10A and/or TIMM10B), TIMM9, AGK and TIMM29.</text>
</comment>
<comment type="subcellular location">
    <subcellularLocation>
        <location evidence="2">Mitochondrion inner membrane</location>
        <topology evidence="2">Peripheral membrane protein</topology>
    </subcellularLocation>
</comment>
<comment type="domain">
    <text evidence="1">The twin CX3C motif contains 4 conserved Cys residues that form 2 disulfide bonds in the mitochondrial intermembrane space. However, during the transit of TIMM10B from cytoplasm into mitochondrion, the Cys residues probably coordinate zinc, thereby preventing folding and allowing its transfer across mitochondrial outer membrane.</text>
</comment>
<comment type="similarity">
    <text evidence="3">Belongs to the small Tim family.</text>
</comment>
<evidence type="ECO:0000250" key="1">
    <source>
        <dbReference type="UniProtKB" id="P87108"/>
    </source>
</evidence>
<evidence type="ECO:0000250" key="2">
    <source>
        <dbReference type="UniProtKB" id="Q9Y5J6"/>
    </source>
</evidence>
<evidence type="ECO:0000305" key="3"/>